<accession>Q0V9L1</accession>
<accession>F6SGZ4</accession>
<reference key="1">
    <citation type="journal article" date="2010" name="Science">
        <title>The genome of the Western clawed frog Xenopus tropicalis.</title>
        <authorList>
            <person name="Hellsten U."/>
            <person name="Harland R.M."/>
            <person name="Gilchrist M.J."/>
            <person name="Hendrix D."/>
            <person name="Jurka J."/>
            <person name="Kapitonov V."/>
            <person name="Ovcharenko I."/>
            <person name="Putnam N.H."/>
            <person name="Shu S."/>
            <person name="Taher L."/>
            <person name="Blitz I.L."/>
            <person name="Blumberg B."/>
            <person name="Dichmann D.S."/>
            <person name="Dubchak I."/>
            <person name="Amaya E."/>
            <person name="Detter J.C."/>
            <person name="Fletcher R."/>
            <person name="Gerhard D.S."/>
            <person name="Goodstein D."/>
            <person name="Graves T."/>
            <person name="Grigoriev I.V."/>
            <person name="Grimwood J."/>
            <person name="Kawashima T."/>
            <person name="Lindquist E."/>
            <person name="Lucas S.M."/>
            <person name="Mead P.E."/>
            <person name="Mitros T."/>
            <person name="Ogino H."/>
            <person name="Ohta Y."/>
            <person name="Poliakov A.V."/>
            <person name="Pollet N."/>
            <person name="Robert J."/>
            <person name="Salamov A."/>
            <person name="Sater A.K."/>
            <person name="Schmutz J."/>
            <person name="Terry A."/>
            <person name="Vize P.D."/>
            <person name="Warren W.C."/>
            <person name="Wells D."/>
            <person name="Wills A."/>
            <person name="Wilson R.K."/>
            <person name="Zimmerman L.B."/>
            <person name="Zorn A.M."/>
            <person name="Grainger R."/>
            <person name="Grammer T."/>
            <person name="Khokha M.K."/>
            <person name="Richardson P.M."/>
            <person name="Rokhsar D.S."/>
        </authorList>
    </citation>
    <scope>NUCLEOTIDE SEQUENCE [LARGE SCALE GENOMIC DNA]</scope>
</reference>
<reference key="2">
    <citation type="submission" date="2006-08" db="EMBL/GenBank/DDBJ databases">
        <authorList>
            <consortium name="NIH - Xenopus Gene Collection (XGC) project"/>
        </authorList>
    </citation>
    <scope>NUCLEOTIDE SEQUENCE [LARGE SCALE MRNA]</scope>
    <source>
        <tissue>Testis</tissue>
    </source>
</reference>
<name>MMS19_XENTR</name>
<dbReference type="EMBL" id="AAMC01095614">
    <property type="status" value="NOT_ANNOTATED_CDS"/>
    <property type="molecule type" value="Genomic_DNA"/>
</dbReference>
<dbReference type="EMBL" id="AAMC01095615">
    <property type="status" value="NOT_ANNOTATED_CDS"/>
    <property type="molecule type" value="Genomic_DNA"/>
</dbReference>
<dbReference type="EMBL" id="AAMC01095616">
    <property type="status" value="NOT_ANNOTATED_CDS"/>
    <property type="molecule type" value="Genomic_DNA"/>
</dbReference>
<dbReference type="EMBL" id="AAMC01095617">
    <property type="status" value="NOT_ANNOTATED_CDS"/>
    <property type="molecule type" value="Genomic_DNA"/>
</dbReference>
<dbReference type="EMBL" id="BC121492">
    <property type="protein sequence ID" value="AAI21493.1"/>
    <property type="molecule type" value="mRNA"/>
</dbReference>
<dbReference type="RefSeq" id="NP_001072380.1">
    <property type="nucleotide sequence ID" value="NM_001078912.1"/>
</dbReference>
<dbReference type="SMR" id="Q0V9L1"/>
<dbReference type="FunCoup" id="Q0V9L1">
    <property type="interactions" value="3782"/>
</dbReference>
<dbReference type="STRING" id="8364.ENSXETP00000031300"/>
<dbReference type="PaxDb" id="8364-ENSXETP00000007443"/>
<dbReference type="DNASU" id="779833"/>
<dbReference type="GeneID" id="779833"/>
<dbReference type="KEGG" id="xtr:779833"/>
<dbReference type="AGR" id="Xenbase:XB-GENE-979258"/>
<dbReference type="CTD" id="64210"/>
<dbReference type="Xenbase" id="XB-GENE-979258">
    <property type="gene designation" value="mms19"/>
</dbReference>
<dbReference type="eggNOG" id="KOG1967">
    <property type="taxonomic scope" value="Eukaryota"/>
</dbReference>
<dbReference type="HOGENOM" id="CLU_005943_2_0_1"/>
<dbReference type="InParanoid" id="Q0V9L1"/>
<dbReference type="OrthoDB" id="342900at2759"/>
<dbReference type="Proteomes" id="UP000008143">
    <property type="component" value="Chromosome 7"/>
</dbReference>
<dbReference type="GO" id="GO:0005737">
    <property type="term" value="C:cytoplasm"/>
    <property type="evidence" value="ECO:0000250"/>
    <property type="project" value="UniProtKB"/>
</dbReference>
<dbReference type="GO" id="GO:0097361">
    <property type="term" value="C:cytosolic [4Fe-4S] assembly targeting complex"/>
    <property type="evidence" value="ECO:0000250"/>
    <property type="project" value="UniProtKB"/>
</dbReference>
<dbReference type="GO" id="GO:0005634">
    <property type="term" value="C:nucleus"/>
    <property type="evidence" value="ECO:0007669"/>
    <property type="project" value="UniProtKB-SubCell"/>
</dbReference>
<dbReference type="GO" id="GO:0005819">
    <property type="term" value="C:spindle"/>
    <property type="evidence" value="ECO:0007669"/>
    <property type="project" value="UniProtKB-SubCell"/>
</dbReference>
<dbReference type="GO" id="GO:0006281">
    <property type="term" value="P:DNA repair"/>
    <property type="evidence" value="ECO:0007669"/>
    <property type="project" value="UniProtKB-KW"/>
</dbReference>
<dbReference type="GO" id="GO:0051604">
    <property type="term" value="P:protein maturation"/>
    <property type="evidence" value="ECO:0000250"/>
    <property type="project" value="UniProtKB"/>
</dbReference>
<dbReference type="FunFam" id="1.25.10.10:FF:000114">
    <property type="entry name" value="MMS19 nucleotide excision repair protein homolog isoform X2"/>
    <property type="match status" value="1"/>
</dbReference>
<dbReference type="Gene3D" id="1.25.10.10">
    <property type="entry name" value="Leucine-rich Repeat Variant"/>
    <property type="match status" value="3"/>
</dbReference>
<dbReference type="InterPro" id="IPR011989">
    <property type="entry name" value="ARM-like"/>
</dbReference>
<dbReference type="InterPro" id="IPR016024">
    <property type="entry name" value="ARM-type_fold"/>
</dbReference>
<dbReference type="InterPro" id="IPR039920">
    <property type="entry name" value="MMS19"/>
</dbReference>
<dbReference type="InterPro" id="IPR024687">
    <property type="entry name" value="MMS19_C"/>
</dbReference>
<dbReference type="InterPro" id="IPR029240">
    <property type="entry name" value="MMS19_N"/>
</dbReference>
<dbReference type="PANTHER" id="PTHR12891">
    <property type="entry name" value="DNA REPAIR/TRANSCRIPTION PROTEIN MET18/MMS19"/>
    <property type="match status" value="1"/>
</dbReference>
<dbReference type="PANTHER" id="PTHR12891:SF0">
    <property type="entry name" value="MMS19 NUCLEOTIDE EXCISION REPAIR PROTEIN HOMOLOG"/>
    <property type="match status" value="1"/>
</dbReference>
<dbReference type="Pfam" id="PF12460">
    <property type="entry name" value="MMS19_C"/>
    <property type="match status" value="1"/>
</dbReference>
<dbReference type="Pfam" id="PF14500">
    <property type="entry name" value="MMS19_N"/>
    <property type="match status" value="1"/>
</dbReference>
<dbReference type="SUPFAM" id="SSF48371">
    <property type="entry name" value="ARM repeat"/>
    <property type="match status" value="2"/>
</dbReference>
<proteinExistence type="evidence at transcript level"/>
<evidence type="ECO:0000250" key="1">
    <source>
        <dbReference type="UniProtKB" id="Q96T76"/>
    </source>
</evidence>
<evidence type="ECO:0000305" key="2"/>
<sequence>MAEAHSALWGLVEEFVVGEQDSRSAEVAAGVKDGIFTVLQVVEALGSCLANPEPRSRAKGMQLLSRVLLECYSRLTEKEVEVLVLFYENRLKDHHLITPHVLKGLMALSMCDVLPQGLAVSVLKSVFQEVHVQSLMQIDRHTVYMIITNFMKTREEELKSLGADFTYGFIQVMDGEKDPRNLLVAFHIVQDIITKNYALGPFVEELFEVTSCYFPIDFTPPPNDPHGITREHLIVGLRAVLVSTSRFAEFFLPLLIEKMDSDVQSAKLDSLQTLIACCTVYGQKDLKEFLSGLWSSIRREVFQTASEKIEAEGLAALQALSACLSRSILSPDAEDLLDSFLNSILQDCKHHLCEPDMKLVWPSAKLLQAAAGGSSRACWKVTANVLPLLLEQYNQHAQSSHRRTILEMTLGFLKLQSRWLDEEDDNGLGNLKEALCTMVFSAVTDSSTQLHQVAVRTLTVLAMQQGFLSSSDIDLVVDHLTRLILQETDSESCMAAIEASGTLAKVHPSVFISRMLPQLCANLQTEPMDINLNESRVVPERFIRQRCLEALAAVSTHQSILKETVPILLDYIGRVHNGEGETNAENVVSICRSLHRVAVQCQLDSEALQFYHEIVLPSLLSLTVQAATQDSGTSCNVLLRDDVLTAMVPVITAACTHLTPELASKSVSQVVALFLDGDVSLFSENNLPSNFQPFQVNGPTELQNHLVSLLMAFVCSLPRNVEIPHLRRLLQHLLSLSLSGCSPFAYSSASKCFAGLINKCPQGDLLDDILQVTAQRIDVGLVDEPSRTRAITLLVWVTKALVLRYHPLSGQLTNKMIGLLSDKQLGPSVANMFSLLVSDSPDIINKACHADIRIMFRQRFFTENVPKLVQGFNSANRDDKPNYLKALSHVLNALPKQVLMPELPSLLSLLLEALSCPDKVVQLSTLTCLEPLLQEAPETLKVHIDGLISKLVSLTLSPAMAVRITALKCILALTKLPLHMLLPYKQQVIRALAKPLDDKKRLVRKEAVETRCQWFLLGSPGS</sequence>
<keyword id="KW-0963">Cytoplasm</keyword>
<keyword id="KW-0206">Cytoskeleton</keyword>
<keyword id="KW-0227">DNA damage</keyword>
<keyword id="KW-0234">DNA repair</keyword>
<keyword id="KW-0539">Nucleus</keyword>
<keyword id="KW-1185">Reference proteome</keyword>
<keyword id="KW-0677">Repeat</keyword>
<protein>
    <recommendedName>
        <fullName>MMS19 nucleotide excision repair protein homolog</fullName>
    </recommendedName>
    <alternativeName>
        <fullName>MMS19-like protein</fullName>
    </alternativeName>
</protein>
<gene>
    <name type="primary">mms19</name>
</gene>
<organism>
    <name type="scientific">Xenopus tropicalis</name>
    <name type="common">Western clawed frog</name>
    <name type="synonym">Silurana tropicalis</name>
    <dbReference type="NCBI Taxonomy" id="8364"/>
    <lineage>
        <taxon>Eukaryota</taxon>
        <taxon>Metazoa</taxon>
        <taxon>Chordata</taxon>
        <taxon>Craniata</taxon>
        <taxon>Vertebrata</taxon>
        <taxon>Euteleostomi</taxon>
        <taxon>Amphibia</taxon>
        <taxon>Batrachia</taxon>
        <taxon>Anura</taxon>
        <taxon>Pipoidea</taxon>
        <taxon>Pipidae</taxon>
        <taxon>Xenopodinae</taxon>
        <taxon>Xenopus</taxon>
        <taxon>Silurana</taxon>
    </lineage>
</organism>
<comment type="function">
    <text evidence="1">Key component of the cytosolic iron-sulfur protein assembly (CIA) complex, a multiprotein complex that mediates the incorporation of iron-sulfur cluster into apoproteins specifically involved in DNA metabolism and genomic integrity. In the CIA complex, MMS19 acts as an adapter between early-acting CIA components and a subset of cellular target iron-sulfur proteins (By similarity).</text>
</comment>
<comment type="subunit">
    <text evidence="1">Component of the CIA complex.</text>
</comment>
<comment type="subcellular location">
    <subcellularLocation>
        <location evidence="1">Nucleus</location>
    </subcellularLocation>
    <subcellularLocation>
        <location evidence="1">Cytoplasm</location>
        <location evidence="1">Cytoskeleton</location>
        <location evidence="1">Spindle</location>
    </subcellularLocation>
</comment>
<comment type="similarity">
    <text evidence="2">Belongs to the MET18/MMS19 family.</text>
</comment>
<feature type="chain" id="PRO_0000419483" description="MMS19 nucleotide excision repair protein homolog">
    <location>
        <begin position="1"/>
        <end position="1022"/>
    </location>
</feature>
<feature type="repeat" description="HEAT 1">
    <location>
        <begin position="858"/>
        <end position="896"/>
    </location>
</feature>
<feature type="repeat" description="HEAT 2">
    <location>
        <begin position="900"/>
        <end position="938"/>
    </location>
</feature>
<feature type="repeat" description="HEAT 3">
    <location>
        <begin position="941"/>
        <end position="979"/>
    </location>
</feature>
<feature type="repeat" description="HEAT 4">
    <location>
        <begin position="982"/>
        <end position="1020"/>
    </location>
</feature>
<feature type="sequence conflict" description="In Ref. 2; AAI21493." evidence="2" ref="2">
    <original>Q</original>
    <variation>L</variation>
    <location>
        <position position="771"/>
    </location>
</feature>